<evidence type="ECO:0000250" key="1">
    <source>
        <dbReference type="UniProtKB" id="Q57071"/>
    </source>
</evidence>
<evidence type="ECO:0000255" key="2">
    <source>
        <dbReference type="PROSITE-ProRule" id="PRU00416"/>
    </source>
</evidence>
<evidence type="ECO:0000255" key="3">
    <source>
        <dbReference type="PROSITE-ProRule" id="PRU00421"/>
    </source>
</evidence>
<evidence type="ECO:0000255" key="4">
    <source>
        <dbReference type="PROSITE-ProRule" id="PRU00426"/>
    </source>
</evidence>
<evidence type="ECO:0000305" key="5"/>
<comment type="function">
    <text evidence="1">The phosphoenolpyruvate-dependent sugar phosphotransferase system (sugar PTS), a major carbohydrate active transport system, catalyzes the phosphorylation of incoming sugar substrates concomitantly with their translocation across the cell membrane. This system is involved in glucose transport.</text>
</comment>
<comment type="catalytic activity">
    <reaction evidence="1">
        <text>N(pros)-phospho-L-histidyl-[protein] + D-glucose(out) = D-glucose 6-phosphate(in) + L-histidyl-[protein]</text>
        <dbReference type="Rhea" id="RHEA:33367"/>
        <dbReference type="Rhea" id="RHEA-COMP:9745"/>
        <dbReference type="Rhea" id="RHEA-COMP:9746"/>
        <dbReference type="ChEBI" id="CHEBI:4167"/>
        <dbReference type="ChEBI" id="CHEBI:29979"/>
        <dbReference type="ChEBI" id="CHEBI:61548"/>
        <dbReference type="ChEBI" id="CHEBI:64837"/>
        <dbReference type="EC" id="2.7.1.199"/>
    </reaction>
</comment>
<comment type="subcellular location">
    <subcellularLocation>
        <location evidence="4">Cell membrane</location>
        <topology evidence="4">Multi-pass membrane protein</topology>
    </subcellularLocation>
</comment>
<comment type="domain">
    <text evidence="4">The EIIC domain forms the PTS system translocation channel and contains the specific substrate-binding site.</text>
</comment>
<comment type="domain">
    <text evidence="3">The EIIB domain is phosphorylated by phospho-EIIA on a cysteinyl or histidyl residue, depending on the transported sugar. Then, it transfers the phosphoryl group to the sugar substrate concomitantly with the sugar uptake processed by the EIIC domain.</text>
</comment>
<comment type="domain">
    <text evidence="2">The EIIA domain is phosphorylated by phospho-HPr on a histidyl residue. Then, it transfers the phosphoryl group to the EIIB domain.</text>
</comment>
<sequence>MRKKLFGQLQRIGKALMLPVAILPAAGLLLAIGTAIQGEALQHYLPFIQNGGVQNVAKLMTAAGSIIFENLPMIFALGVAIGLAGGDGVAAIAAFVGYIIMNKTMGDFLQVTPKNVTDPASGYASILGIPTLQTGVFGGIIIGALAAWCYNKFYNINLPSYLGFFAGKRFVPIMMATTSFILAFPMALIWPTIQSGLNAFSTGLLDSNTGVAVFLFGFIKRLLIPFGLHHIFHAPFWFEFGSWKNAAGEIIHGDQRIFIEQIREGAHLTAGKFMQGEFPVMMFGLPAAALAIYHTAKPENKKVVAGLMGSAALTSFLTGITEPLEFSFLFVAPLLFFIHAVLDGLSFLTLYLLDVHLGYTFSGGFIDYVLLGVLPNKTQWWLVIPVGLVYAVIYYFVFRFLIVKLKYKTPGREDKQSQAVTASATELPYAVLEAMGGKANIKHLDACITRLRVEVNDKSKVDVPGLKDLGASGVLEVGNNMQAIFGPKSDQIKHEMQQIMNGQVVENPTTMEDDKDETVVVAEDKSATSELSHIVHAPLTGEVTPLSEVPDQVFSEKMMGDGIAIKPSQGEVRAPFNGKIQMIFPTKHAIGLVSDSGLELLIHIGLDTVKLNGEGFTLHVEEGQEVKQGDLLINFDLDYIRNHAKSDITPIIVTQGNITNLDFKQGEHGNISFGDQLFEAK</sequence>
<name>PTG3C_STAAN</name>
<keyword id="KW-1003">Cell membrane</keyword>
<keyword id="KW-0418">Kinase</keyword>
<keyword id="KW-0472">Membrane</keyword>
<keyword id="KW-0598">Phosphotransferase system</keyword>
<keyword id="KW-0762">Sugar transport</keyword>
<keyword id="KW-0808">Transferase</keyword>
<keyword id="KW-0812">Transmembrane</keyword>
<keyword id="KW-1133">Transmembrane helix</keyword>
<keyword id="KW-0813">Transport</keyword>
<accession>Q7A807</accession>
<dbReference type="EC" id="2.7.1.199" evidence="1"/>
<dbReference type="EMBL" id="BA000018">
    <property type="protein sequence ID" value="BAB41404.1"/>
    <property type="molecule type" value="Genomic_DNA"/>
</dbReference>
<dbReference type="PIR" id="A89781">
    <property type="entry name" value="A89781"/>
</dbReference>
<dbReference type="RefSeq" id="WP_001227709.1">
    <property type="nucleotide sequence ID" value="NC_002745.2"/>
</dbReference>
<dbReference type="SMR" id="Q7A807"/>
<dbReference type="EnsemblBacteria" id="BAB41404">
    <property type="protein sequence ID" value="BAB41404"/>
    <property type="gene ID" value="BAB41404"/>
</dbReference>
<dbReference type="KEGG" id="sau:SA0183"/>
<dbReference type="HOGENOM" id="CLU_012312_1_1_9"/>
<dbReference type="GO" id="GO:0005886">
    <property type="term" value="C:plasma membrane"/>
    <property type="evidence" value="ECO:0007669"/>
    <property type="project" value="UniProtKB-SubCell"/>
</dbReference>
<dbReference type="GO" id="GO:0055056">
    <property type="term" value="F:D-glucose transmembrane transporter activity"/>
    <property type="evidence" value="ECO:0007669"/>
    <property type="project" value="InterPro"/>
</dbReference>
<dbReference type="GO" id="GO:0016301">
    <property type="term" value="F:kinase activity"/>
    <property type="evidence" value="ECO:0007669"/>
    <property type="project" value="UniProtKB-KW"/>
</dbReference>
<dbReference type="GO" id="GO:0008982">
    <property type="term" value="F:protein-N(PI)-phosphohistidine-sugar phosphotransferase activity"/>
    <property type="evidence" value="ECO:0007669"/>
    <property type="project" value="InterPro"/>
</dbReference>
<dbReference type="GO" id="GO:0090563">
    <property type="term" value="F:protein-phosphocysteine-sugar phosphotransferase activity"/>
    <property type="evidence" value="ECO:0007669"/>
    <property type="project" value="TreeGrafter"/>
</dbReference>
<dbReference type="GO" id="GO:1904659">
    <property type="term" value="P:D-glucose transmembrane transport"/>
    <property type="evidence" value="ECO:0007669"/>
    <property type="project" value="InterPro"/>
</dbReference>
<dbReference type="GO" id="GO:0009401">
    <property type="term" value="P:phosphoenolpyruvate-dependent sugar phosphotransferase system"/>
    <property type="evidence" value="ECO:0007669"/>
    <property type="project" value="UniProtKB-KW"/>
</dbReference>
<dbReference type="CDD" id="cd00210">
    <property type="entry name" value="PTS_IIA_glc"/>
    <property type="match status" value="1"/>
</dbReference>
<dbReference type="CDD" id="cd00212">
    <property type="entry name" value="PTS_IIB_glc"/>
    <property type="match status" value="1"/>
</dbReference>
<dbReference type="FunFam" id="2.70.70.10:FF:000001">
    <property type="entry name" value="PTS system glucose-specific IIA component"/>
    <property type="match status" value="1"/>
</dbReference>
<dbReference type="FunFam" id="3.30.1360.60:FF:000001">
    <property type="entry name" value="PTS system glucose-specific IIBC component PtsG"/>
    <property type="match status" value="1"/>
</dbReference>
<dbReference type="Gene3D" id="2.70.70.10">
    <property type="entry name" value="Glucose Permease (Domain IIA)"/>
    <property type="match status" value="1"/>
</dbReference>
<dbReference type="Gene3D" id="3.30.1360.60">
    <property type="entry name" value="Glucose permease domain IIB"/>
    <property type="match status" value="1"/>
</dbReference>
<dbReference type="InterPro" id="IPR011055">
    <property type="entry name" value="Dup_hybrid_motif"/>
</dbReference>
<dbReference type="InterPro" id="IPR036878">
    <property type="entry name" value="Glu_permease_IIB"/>
</dbReference>
<dbReference type="InterPro" id="IPR018113">
    <property type="entry name" value="PTrfase_EIIB_Cys"/>
</dbReference>
<dbReference type="InterPro" id="IPR001127">
    <property type="entry name" value="PTS_EIIA_1_perm"/>
</dbReference>
<dbReference type="InterPro" id="IPR003352">
    <property type="entry name" value="PTS_EIIC"/>
</dbReference>
<dbReference type="InterPro" id="IPR013013">
    <property type="entry name" value="PTS_EIIC_1"/>
</dbReference>
<dbReference type="InterPro" id="IPR050429">
    <property type="entry name" value="PTS_Glucose_EIICBA"/>
</dbReference>
<dbReference type="InterPro" id="IPR001996">
    <property type="entry name" value="PTS_IIB_1"/>
</dbReference>
<dbReference type="InterPro" id="IPR011299">
    <property type="entry name" value="PTS_IIBC_glc"/>
</dbReference>
<dbReference type="NCBIfam" id="TIGR00826">
    <property type="entry name" value="EIIB_glc"/>
    <property type="match status" value="1"/>
</dbReference>
<dbReference type="NCBIfam" id="TIGR00830">
    <property type="entry name" value="PTBA"/>
    <property type="match status" value="1"/>
</dbReference>
<dbReference type="NCBIfam" id="TIGR02002">
    <property type="entry name" value="PTS-II-BC-glcB"/>
    <property type="match status" value="1"/>
</dbReference>
<dbReference type="PANTHER" id="PTHR30009">
    <property type="entry name" value="CYTOCHROME C-TYPE SYNTHESIS PROTEIN AND PTS TRANSMEMBRANE COMPONENT"/>
    <property type="match status" value="1"/>
</dbReference>
<dbReference type="PANTHER" id="PTHR30009:SF20">
    <property type="entry name" value="PTS SYSTEM GLUCOSE-SPECIFIC EIICB COMPONENT-RELATED"/>
    <property type="match status" value="1"/>
</dbReference>
<dbReference type="Pfam" id="PF00358">
    <property type="entry name" value="PTS_EIIA_1"/>
    <property type="match status" value="1"/>
</dbReference>
<dbReference type="Pfam" id="PF00367">
    <property type="entry name" value="PTS_EIIB"/>
    <property type="match status" value="1"/>
</dbReference>
<dbReference type="Pfam" id="PF02378">
    <property type="entry name" value="PTS_EIIC"/>
    <property type="match status" value="1"/>
</dbReference>
<dbReference type="SUPFAM" id="SSF51261">
    <property type="entry name" value="Duplicated hybrid motif"/>
    <property type="match status" value="1"/>
</dbReference>
<dbReference type="SUPFAM" id="SSF55604">
    <property type="entry name" value="Glucose permease domain IIB"/>
    <property type="match status" value="1"/>
</dbReference>
<dbReference type="PROSITE" id="PS51093">
    <property type="entry name" value="PTS_EIIA_TYPE_1"/>
    <property type="match status" value="1"/>
</dbReference>
<dbReference type="PROSITE" id="PS00371">
    <property type="entry name" value="PTS_EIIA_TYPE_1_HIS"/>
    <property type="match status" value="1"/>
</dbReference>
<dbReference type="PROSITE" id="PS51098">
    <property type="entry name" value="PTS_EIIB_TYPE_1"/>
    <property type="match status" value="1"/>
</dbReference>
<dbReference type="PROSITE" id="PS01035">
    <property type="entry name" value="PTS_EIIB_TYPE_1_CYS"/>
    <property type="match status" value="1"/>
</dbReference>
<dbReference type="PROSITE" id="PS51103">
    <property type="entry name" value="PTS_EIIC_TYPE_1"/>
    <property type="match status" value="1"/>
</dbReference>
<proteinExistence type="evidence at protein level"/>
<protein>
    <recommendedName>
        <fullName evidence="1">PTS system glucose-specific EIICBA component</fullName>
        <ecNumber evidence="1">2.7.1.199</ecNumber>
    </recommendedName>
    <alternativeName>
        <fullName evidence="1">EIICBA-Glc</fullName>
        <shortName evidence="1">EII-Glc</shortName>
    </alternativeName>
    <alternativeName>
        <fullName evidence="5">EIICBA-Glc 1</fullName>
    </alternativeName>
    <domain>
        <recommendedName>
            <fullName evidence="1">Glucose permease IIC component</fullName>
        </recommendedName>
        <alternativeName>
            <fullName evidence="1">PTS system glucose-specific EIIC component</fullName>
        </alternativeName>
    </domain>
    <domain>
        <recommendedName>
            <fullName evidence="1">Glucose-specific phosphotransferase enzyme IIB component</fullName>
        </recommendedName>
        <alternativeName>
            <fullName evidence="1">PTS system glucose-specific EIIB component</fullName>
        </alternativeName>
    </domain>
    <domain>
        <recommendedName>
            <fullName evidence="1">Glucose-specific phosphotransferase enzyme IIA component</fullName>
        </recommendedName>
        <alternativeName>
            <fullName evidence="1">PTS system glucose-specific EIIA component</fullName>
        </alternativeName>
    </domain>
</protein>
<gene>
    <name type="primary">ptsG</name>
    <name type="synonym">glcA</name>
    <name type="ordered locus">SA0183</name>
</gene>
<feature type="chain" id="PRO_0000351396" description="PTS system glucose-specific EIICBA component">
    <location>
        <begin position="1"/>
        <end position="681"/>
    </location>
</feature>
<feature type="transmembrane region" description="Helical" evidence="4">
    <location>
        <begin position="16"/>
        <end position="36"/>
    </location>
</feature>
<feature type="transmembrane region" description="Helical" evidence="4">
    <location>
        <begin position="73"/>
        <end position="93"/>
    </location>
</feature>
<feature type="transmembrane region" description="Helical" evidence="4">
    <location>
        <begin position="126"/>
        <end position="146"/>
    </location>
</feature>
<feature type="transmembrane region" description="Helical" evidence="4">
    <location>
        <begin position="170"/>
        <end position="190"/>
    </location>
</feature>
<feature type="transmembrane region" description="Helical" evidence="4">
    <location>
        <begin position="199"/>
        <end position="219"/>
    </location>
</feature>
<feature type="transmembrane region" description="Helical" evidence="4">
    <location>
        <begin position="273"/>
        <end position="293"/>
    </location>
</feature>
<feature type="transmembrane region" description="Helical" evidence="4">
    <location>
        <begin position="303"/>
        <end position="323"/>
    </location>
</feature>
<feature type="transmembrane region" description="Helical" evidence="4">
    <location>
        <begin position="328"/>
        <end position="348"/>
    </location>
</feature>
<feature type="transmembrane region" description="Helical" evidence="4">
    <location>
        <begin position="355"/>
        <end position="375"/>
    </location>
</feature>
<feature type="transmembrane region" description="Helical" evidence="4">
    <location>
        <begin position="383"/>
        <end position="403"/>
    </location>
</feature>
<feature type="domain" description="PTS EIIC type-1" evidence="4">
    <location>
        <begin position="3"/>
        <end position="414"/>
    </location>
</feature>
<feature type="domain" description="PTS EIIB type-1" evidence="3">
    <location>
        <begin position="425"/>
        <end position="506"/>
    </location>
</feature>
<feature type="domain" description="PTS EIIA type-1" evidence="2">
    <location>
        <begin position="551"/>
        <end position="655"/>
    </location>
</feature>
<feature type="active site" description="Phosphocysteine intermediate; for EIIB activity" evidence="3">
    <location>
        <position position="447"/>
    </location>
</feature>
<feature type="active site" description="Tele-phosphohistidine intermediate; for EIIA activity" evidence="2">
    <location>
        <position position="603"/>
    </location>
</feature>
<organism>
    <name type="scientific">Staphylococcus aureus (strain N315)</name>
    <dbReference type="NCBI Taxonomy" id="158879"/>
    <lineage>
        <taxon>Bacteria</taxon>
        <taxon>Bacillati</taxon>
        <taxon>Bacillota</taxon>
        <taxon>Bacilli</taxon>
        <taxon>Bacillales</taxon>
        <taxon>Staphylococcaceae</taxon>
        <taxon>Staphylococcus</taxon>
    </lineage>
</organism>
<reference key="1">
    <citation type="journal article" date="2001" name="Lancet">
        <title>Whole genome sequencing of meticillin-resistant Staphylococcus aureus.</title>
        <authorList>
            <person name="Kuroda M."/>
            <person name="Ohta T."/>
            <person name="Uchiyama I."/>
            <person name="Baba T."/>
            <person name="Yuzawa H."/>
            <person name="Kobayashi I."/>
            <person name="Cui L."/>
            <person name="Oguchi A."/>
            <person name="Aoki K."/>
            <person name="Nagai Y."/>
            <person name="Lian J.-Q."/>
            <person name="Ito T."/>
            <person name="Kanamori M."/>
            <person name="Matsumaru H."/>
            <person name="Maruyama A."/>
            <person name="Murakami H."/>
            <person name="Hosoyama A."/>
            <person name="Mizutani-Ui Y."/>
            <person name="Takahashi N.K."/>
            <person name="Sawano T."/>
            <person name="Inoue R."/>
            <person name="Kaito C."/>
            <person name="Sekimizu K."/>
            <person name="Hirakawa H."/>
            <person name="Kuhara S."/>
            <person name="Goto S."/>
            <person name="Yabuzaki J."/>
            <person name="Kanehisa M."/>
            <person name="Yamashita A."/>
            <person name="Oshima K."/>
            <person name="Furuya K."/>
            <person name="Yoshino C."/>
            <person name="Shiba T."/>
            <person name="Hattori M."/>
            <person name="Ogasawara N."/>
            <person name="Hayashi H."/>
            <person name="Hiramatsu K."/>
        </authorList>
    </citation>
    <scope>NUCLEOTIDE SEQUENCE [LARGE SCALE GENOMIC DNA]</scope>
    <source>
        <strain>N315</strain>
    </source>
</reference>
<reference key="2">
    <citation type="submission" date="2007-10" db="UniProtKB">
        <title>Shotgun proteomic analysis of total and membrane protein extracts of S. aureus strain N315.</title>
        <authorList>
            <person name="Vaezzadeh A.R."/>
            <person name="Deshusses J."/>
            <person name="Lescuyer P."/>
            <person name="Hochstrasser D.F."/>
        </authorList>
    </citation>
    <scope>IDENTIFICATION BY MASS SPECTROMETRY [LARGE SCALE ANALYSIS]</scope>
    <source>
        <strain>N315</strain>
    </source>
</reference>